<keyword id="KW-0143">Chaperone</keyword>
<keyword id="KW-0963">Cytoplasm</keyword>
<keyword id="KW-0533">Nickel</keyword>
<keyword id="KW-0996">Nickel insertion</keyword>
<keyword id="KW-1185">Reference proteome</keyword>
<comment type="function">
    <text evidence="1">Involved in urease metallocenter assembly. Binds nickel. Probably functions as a nickel donor during metallocenter assembly.</text>
</comment>
<comment type="subcellular location">
    <subcellularLocation>
        <location evidence="1">Cytoplasm</location>
    </subcellularLocation>
</comment>
<comment type="similarity">
    <text evidence="1">Belongs to the UreE family.</text>
</comment>
<sequence length="205" mass="22126">MKIANTFIKRGAAGGLDLSQAPGVTLTLAERRRSRQRLDLDEGRGELGMAIERGQTLRDGDVLVAEDGTYVVVRAALEDVARVTAATPWQLARAAYHLGNRHVLLEIAERHLQFEYDAVLIDMLAQLGGVTATRLRAVFEPDVGAYGGGHRHGHDESFGDDYALAQAAYHAHEAHPHAHFHAGGHGHVHSGHGHGGKHGEHDAES</sequence>
<feature type="chain" id="PRO_0000223403" description="Urease accessory protein UreE">
    <location>
        <begin position="1"/>
        <end position="205"/>
    </location>
</feature>
<feature type="region of interest" description="Disordered" evidence="2">
    <location>
        <begin position="178"/>
        <end position="205"/>
    </location>
</feature>
<feature type="compositionally biased region" description="Basic residues" evidence="2">
    <location>
        <begin position="178"/>
        <end position="196"/>
    </location>
</feature>
<gene>
    <name evidence="1" type="primary">ureE</name>
    <name type="ordered locus">BP3167.1</name>
</gene>
<reference key="1">
    <citation type="journal article" date="2003" name="Nat. Genet.">
        <title>Comparative analysis of the genome sequences of Bordetella pertussis, Bordetella parapertussis and Bordetella bronchiseptica.</title>
        <authorList>
            <person name="Parkhill J."/>
            <person name="Sebaihia M."/>
            <person name="Preston A."/>
            <person name="Murphy L.D."/>
            <person name="Thomson N.R."/>
            <person name="Harris D.E."/>
            <person name="Holden M.T.G."/>
            <person name="Churcher C.M."/>
            <person name="Bentley S.D."/>
            <person name="Mungall K.L."/>
            <person name="Cerdeno-Tarraga A.-M."/>
            <person name="Temple L."/>
            <person name="James K.D."/>
            <person name="Harris B."/>
            <person name="Quail M.A."/>
            <person name="Achtman M."/>
            <person name="Atkin R."/>
            <person name="Baker S."/>
            <person name="Basham D."/>
            <person name="Bason N."/>
            <person name="Cherevach I."/>
            <person name="Chillingworth T."/>
            <person name="Collins M."/>
            <person name="Cronin A."/>
            <person name="Davis P."/>
            <person name="Doggett J."/>
            <person name="Feltwell T."/>
            <person name="Goble A."/>
            <person name="Hamlin N."/>
            <person name="Hauser H."/>
            <person name="Holroyd S."/>
            <person name="Jagels K."/>
            <person name="Leather S."/>
            <person name="Moule S."/>
            <person name="Norberczak H."/>
            <person name="O'Neil S."/>
            <person name="Ormond D."/>
            <person name="Price C."/>
            <person name="Rabbinowitsch E."/>
            <person name="Rutter S."/>
            <person name="Sanders M."/>
            <person name="Saunders D."/>
            <person name="Seeger K."/>
            <person name="Sharp S."/>
            <person name="Simmonds M."/>
            <person name="Skelton J."/>
            <person name="Squares R."/>
            <person name="Squares S."/>
            <person name="Stevens K."/>
            <person name="Unwin L."/>
            <person name="Whitehead S."/>
            <person name="Barrell B.G."/>
            <person name="Maskell D.J."/>
        </authorList>
    </citation>
    <scope>NUCLEOTIDE SEQUENCE [LARGE SCALE GENOMIC DNA]</scope>
    <source>
        <strain>Tohama I / ATCC BAA-589 / NCTC 13251</strain>
    </source>
</reference>
<organism>
    <name type="scientific">Bordetella pertussis (strain Tohama I / ATCC BAA-589 / NCTC 13251)</name>
    <dbReference type="NCBI Taxonomy" id="257313"/>
    <lineage>
        <taxon>Bacteria</taxon>
        <taxon>Pseudomonadati</taxon>
        <taxon>Pseudomonadota</taxon>
        <taxon>Betaproteobacteria</taxon>
        <taxon>Burkholderiales</taxon>
        <taxon>Alcaligenaceae</taxon>
        <taxon>Bordetella</taxon>
    </lineage>
</organism>
<dbReference type="EMBL" id="BX640420">
    <property type="protein sequence ID" value="CAE43435.1"/>
    <property type="molecule type" value="Genomic_DNA"/>
</dbReference>
<dbReference type="RefSeq" id="WP_014905506.1">
    <property type="nucleotide sequence ID" value="NZ_CP039022.1"/>
</dbReference>
<dbReference type="SMR" id="Q7VUD4"/>
<dbReference type="STRING" id="257313.BP3167A"/>
<dbReference type="GeneID" id="69603095"/>
<dbReference type="KEGG" id="bpe:BP3167A"/>
<dbReference type="HOGENOM" id="CLU_093757_0_0_4"/>
<dbReference type="Proteomes" id="UP000002676">
    <property type="component" value="Chromosome"/>
</dbReference>
<dbReference type="GO" id="GO:0005737">
    <property type="term" value="C:cytoplasm"/>
    <property type="evidence" value="ECO:0007669"/>
    <property type="project" value="UniProtKB-SubCell"/>
</dbReference>
<dbReference type="GO" id="GO:0016151">
    <property type="term" value="F:nickel cation binding"/>
    <property type="evidence" value="ECO:0007669"/>
    <property type="project" value="UniProtKB-UniRule"/>
</dbReference>
<dbReference type="GO" id="GO:0051082">
    <property type="term" value="F:unfolded protein binding"/>
    <property type="evidence" value="ECO:0007669"/>
    <property type="project" value="UniProtKB-UniRule"/>
</dbReference>
<dbReference type="GO" id="GO:0006457">
    <property type="term" value="P:protein folding"/>
    <property type="evidence" value="ECO:0007669"/>
    <property type="project" value="InterPro"/>
</dbReference>
<dbReference type="GO" id="GO:0065003">
    <property type="term" value="P:protein-containing complex assembly"/>
    <property type="evidence" value="ECO:0007669"/>
    <property type="project" value="InterPro"/>
</dbReference>
<dbReference type="GO" id="GO:0019627">
    <property type="term" value="P:urea metabolic process"/>
    <property type="evidence" value="ECO:0007669"/>
    <property type="project" value="InterPro"/>
</dbReference>
<dbReference type="CDD" id="cd00571">
    <property type="entry name" value="UreE"/>
    <property type="match status" value="1"/>
</dbReference>
<dbReference type="Gene3D" id="2.60.260.20">
    <property type="entry name" value="Urease metallochaperone UreE, N-terminal domain"/>
    <property type="match status" value="1"/>
</dbReference>
<dbReference type="Gene3D" id="3.30.70.790">
    <property type="entry name" value="UreE, C-terminal domain"/>
    <property type="match status" value="1"/>
</dbReference>
<dbReference type="HAMAP" id="MF_00822">
    <property type="entry name" value="UreE"/>
    <property type="match status" value="1"/>
</dbReference>
<dbReference type="InterPro" id="IPR012406">
    <property type="entry name" value="UreE"/>
</dbReference>
<dbReference type="InterPro" id="IPR007864">
    <property type="entry name" value="UreE_C_dom"/>
</dbReference>
<dbReference type="InterPro" id="IPR004029">
    <property type="entry name" value="UreE_N"/>
</dbReference>
<dbReference type="InterPro" id="IPR036118">
    <property type="entry name" value="UreE_N_sf"/>
</dbReference>
<dbReference type="NCBIfam" id="NF009762">
    <property type="entry name" value="PRK13263.1"/>
    <property type="match status" value="1"/>
</dbReference>
<dbReference type="Pfam" id="PF05194">
    <property type="entry name" value="UreE_C"/>
    <property type="match status" value="1"/>
</dbReference>
<dbReference type="Pfam" id="PF02814">
    <property type="entry name" value="UreE_N"/>
    <property type="match status" value="1"/>
</dbReference>
<dbReference type="SMART" id="SM00988">
    <property type="entry name" value="UreE_N"/>
    <property type="match status" value="1"/>
</dbReference>
<dbReference type="SUPFAM" id="SSF69737">
    <property type="entry name" value="Urease metallochaperone UreE, C-terminal domain"/>
    <property type="match status" value="1"/>
</dbReference>
<dbReference type="SUPFAM" id="SSF69287">
    <property type="entry name" value="Urease metallochaperone UreE, N-terminal domain"/>
    <property type="match status" value="1"/>
</dbReference>
<proteinExistence type="inferred from homology"/>
<evidence type="ECO:0000255" key="1">
    <source>
        <dbReference type="HAMAP-Rule" id="MF_00822"/>
    </source>
</evidence>
<evidence type="ECO:0000256" key="2">
    <source>
        <dbReference type="SAM" id="MobiDB-lite"/>
    </source>
</evidence>
<accession>Q7VUD4</accession>
<name>UREE_BORPE</name>
<protein>
    <recommendedName>
        <fullName evidence="1">Urease accessory protein UreE</fullName>
    </recommendedName>
</protein>